<gene>
    <name evidence="1" type="primary">aat</name>
    <name type="ordered locus">PD_0667</name>
</gene>
<name>LFTR_XYLFT</name>
<evidence type="ECO:0000255" key="1">
    <source>
        <dbReference type="HAMAP-Rule" id="MF_00688"/>
    </source>
</evidence>
<evidence type="ECO:0000256" key="2">
    <source>
        <dbReference type="SAM" id="MobiDB-lite"/>
    </source>
</evidence>
<dbReference type="EC" id="2.3.2.6" evidence="1"/>
<dbReference type="EMBL" id="AE009442">
    <property type="protein sequence ID" value="AAO28538.1"/>
    <property type="molecule type" value="Genomic_DNA"/>
</dbReference>
<dbReference type="RefSeq" id="WP_004089137.1">
    <property type="nucleotide sequence ID" value="NC_004556.1"/>
</dbReference>
<dbReference type="SMR" id="Q87DL5"/>
<dbReference type="GeneID" id="93904445"/>
<dbReference type="KEGG" id="xft:PD_0667"/>
<dbReference type="HOGENOM" id="CLU_075045_0_0_6"/>
<dbReference type="Proteomes" id="UP000002516">
    <property type="component" value="Chromosome"/>
</dbReference>
<dbReference type="GO" id="GO:0005737">
    <property type="term" value="C:cytoplasm"/>
    <property type="evidence" value="ECO:0007669"/>
    <property type="project" value="UniProtKB-SubCell"/>
</dbReference>
<dbReference type="GO" id="GO:0008914">
    <property type="term" value="F:leucyl-tRNA--protein transferase activity"/>
    <property type="evidence" value="ECO:0007669"/>
    <property type="project" value="UniProtKB-UniRule"/>
</dbReference>
<dbReference type="GO" id="GO:0030163">
    <property type="term" value="P:protein catabolic process"/>
    <property type="evidence" value="ECO:0007669"/>
    <property type="project" value="UniProtKB-UniRule"/>
</dbReference>
<dbReference type="FunFam" id="3.30.70.3550:FF:000001">
    <property type="entry name" value="Leucyl/phenylalanyl-tRNA--protein transferase"/>
    <property type="match status" value="1"/>
</dbReference>
<dbReference type="Gene3D" id="3.40.630.70">
    <property type="entry name" value="Leucyl/phenylalanyl-tRNA-protein transferase, C-terminal domain"/>
    <property type="match status" value="1"/>
</dbReference>
<dbReference type="Gene3D" id="3.30.70.3550">
    <property type="entry name" value="Leucyl/phenylalanyl-tRNA-protein transferase, N-terminal domain"/>
    <property type="match status" value="1"/>
</dbReference>
<dbReference type="HAMAP" id="MF_00688">
    <property type="entry name" value="Leu_Phe_trans"/>
    <property type="match status" value="1"/>
</dbReference>
<dbReference type="InterPro" id="IPR016181">
    <property type="entry name" value="Acyl_CoA_acyltransferase"/>
</dbReference>
<dbReference type="InterPro" id="IPR004616">
    <property type="entry name" value="Leu/Phe-tRNA_Trfase"/>
</dbReference>
<dbReference type="InterPro" id="IPR042203">
    <property type="entry name" value="Leu/Phe-tRNA_Trfase_C"/>
</dbReference>
<dbReference type="InterPro" id="IPR042221">
    <property type="entry name" value="Leu/Phe-tRNA_Trfase_N"/>
</dbReference>
<dbReference type="NCBIfam" id="TIGR00667">
    <property type="entry name" value="aat"/>
    <property type="match status" value="1"/>
</dbReference>
<dbReference type="PANTHER" id="PTHR30098">
    <property type="entry name" value="LEUCYL/PHENYLALANYL-TRNA--PROTEIN TRANSFERASE"/>
    <property type="match status" value="1"/>
</dbReference>
<dbReference type="PANTHER" id="PTHR30098:SF2">
    <property type="entry name" value="LEUCYL_PHENYLALANYL-TRNA--PROTEIN TRANSFERASE"/>
    <property type="match status" value="1"/>
</dbReference>
<dbReference type="Pfam" id="PF03588">
    <property type="entry name" value="Leu_Phe_trans"/>
    <property type="match status" value="1"/>
</dbReference>
<dbReference type="SUPFAM" id="SSF55729">
    <property type="entry name" value="Acyl-CoA N-acyltransferases (Nat)"/>
    <property type="match status" value="1"/>
</dbReference>
<reference key="1">
    <citation type="journal article" date="2003" name="J. Bacteriol.">
        <title>Comparative analyses of the complete genome sequences of Pierce's disease and citrus variegated chlorosis strains of Xylella fastidiosa.</title>
        <authorList>
            <person name="Van Sluys M.A."/>
            <person name="de Oliveira M.C."/>
            <person name="Monteiro-Vitorello C.B."/>
            <person name="Miyaki C.Y."/>
            <person name="Furlan L.R."/>
            <person name="Camargo L.E.A."/>
            <person name="da Silva A.C.R."/>
            <person name="Moon D.H."/>
            <person name="Takita M.A."/>
            <person name="Lemos E.G.M."/>
            <person name="Machado M.A."/>
            <person name="Ferro M.I.T."/>
            <person name="da Silva F.R."/>
            <person name="Goldman M.H.S."/>
            <person name="Goldman G.H."/>
            <person name="Lemos M.V.F."/>
            <person name="El-Dorry H."/>
            <person name="Tsai S.M."/>
            <person name="Carrer H."/>
            <person name="Carraro D.M."/>
            <person name="de Oliveira R.C."/>
            <person name="Nunes L.R."/>
            <person name="Siqueira W.J."/>
            <person name="Coutinho L.L."/>
            <person name="Kimura E.T."/>
            <person name="Ferro E.S."/>
            <person name="Harakava R."/>
            <person name="Kuramae E.E."/>
            <person name="Marino C.L."/>
            <person name="Giglioti E."/>
            <person name="Abreu I.L."/>
            <person name="Alves L.M.C."/>
            <person name="do Amaral A.M."/>
            <person name="Baia G.S."/>
            <person name="Blanco S.R."/>
            <person name="Brito M.S."/>
            <person name="Cannavan F.S."/>
            <person name="Celestino A.V."/>
            <person name="da Cunha A.F."/>
            <person name="Fenille R.C."/>
            <person name="Ferro J.A."/>
            <person name="Formighieri E.F."/>
            <person name="Kishi L.T."/>
            <person name="Leoni S.G."/>
            <person name="Oliveira A.R."/>
            <person name="Rosa V.E. Jr."/>
            <person name="Sassaki F.T."/>
            <person name="Sena J.A.D."/>
            <person name="de Souza A.A."/>
            <person name="Truffi D."/>
            <person name="Tsukumo F."/>
            <person name="Yanai G.M."/>
            <person name="Zaros L.G."/>
            <person name="Civerolo E.L."/>
            <person name="Simpson A.J.G."/>
            <person name="Almeida N.F. Jr."/>
            <person name="Setubal J.C."/>
            <person name="Kitajima J.P."/>
        </authorList>
    </citation>
    <scope>NUCLEOTIDE SEQUENCE [LARGE SCALE GENOMIC DNA]</scope>
    <source>
        <strain>Temecula1 / ATCC 700964</strain>
    </source>
</reference>
<keyword id="KW-0012">Acyltransferase</keyword>
<keyword id="KW-0963">Cytoplasm</keyword>
<keyword id="KW-1185">Reference proteome</keyword>
<keyword id="KW-0808">Transferase</keyword>
<sequence>MHSQPYLLSPTPNTPFPPAEHALHEPNGLLAIGGDLTPQRLLAAYRSGIFPWFTEGQPPLWWSPDPRTVFHSDNIHLSRRFRRSLRTSTWTVRADTMFAAVIDACASTPRRGQDGTWITANMREAYLTLHQHGYAHSVEVFDGTMLVGGIYGVAIGRMFFGESMFSTHNGASKIALASLAYFLHTHSVPLIDAQVENQHLLNLGAERWPRRDFLTSVRRLITQTELPACWSVLFGEKLSRDLV</sequence>
<organism>
    <name type="scientific">Xylella fastidiosa (strain Temecula1 / ATCC 700964)</name>
    <dbReference type="NCBI Taxonomy" id="183190"/>
    <lineage>
        <taxon>Bacteria</taxon>
        <taxon>Pseudomonadati</taxon>
        <taxon>Pseudomonadota</taxon>
        <taxon>Gammaproteobacteria</taxon>
        <taxon>Lysobacterales</taxon>
        <taxon>Lysobacteraceae</taxon>
        <taxon>Xylella</taxon>
    </lineage>
</organism>
<feature type="chain" id="PRO_0000207253" description="Leucyl/phenylalanyl-tRNA--protein transferase">
    <location>
        <begin position="1"/>
        <end position="243"/>
    </location>
</feature>
<feature type="region of interest" description="Disordered" evidence="2">
    <location>
        <begin position="1"/>
        <end position="22"/>
    </location>
</feature>
<proteinExistence type="inferred from homology"/>
<comment type="function">
    <text evidence="1">Functions in the N-end rule pathway of protein degradation where it conjugates Leu, Phe and, less efficiently, Met from aminoacyl-tRNAs to the N-termini of proteins containing an N-terminal arginine or lysine.</text>
</comment>
<comment type="catalytic activity">
    <reaction evidence="1">
        <text>N-terminal L-lysyl-[protein] + L-leucyl-tRNA(Leu) = N-terminal L-leucyl-L-lysyl-[protein] + tRNA(Leu) + H(+)</text>
        <dbReference type="Rhea" id="RHEA:12340"/>
        <dbReference type="Rhea" id="RHEA-COMP:9613"/>
        <dbReference type="Rhea" id="RHEA-COMP:9622"/>
        <dbReference type="Rhea" id="RHEA-COMP:12670"/>
        <dbReference type="Rhea" id="RHEA-COMP:12671"/>
        <dbReference type="ChEBI" id="CHEBI:15378"/>
        <dbReference type="ChEBI" id="CHEBI:65249"/>
        <dbReference type="ChEBI" id="CHEBI:78442"/>
        <dbReference type="ChEBI" id="CHEBI:78494"/>
        <dbReference type="ChEBI" id="CHEBI:133043"/>
        <dbReference type="EC" id="2.3.2.6"/>
    </reaction>
</comment>
<comment type="catalytic activity">
    <reaction evidence="1">
        <text>N-terminal L-arginyl-[protein] + L-leucyl-tRNA(Leu) = N-terminal L-leucyl-L-arginyl-[protein] + tRNA(Leu) + H(+)</text>
        <dbReference type="Rhea" id="RHEA:50416"/>
        <dbReference type="Rhea" id="RHEA-COMP:9613"/>
        <dbReference type="Rhea" id="RHEA-COMP:9622"/>
        <dbReference type="Rhea" id="RHEA-COMP:12672"/>
        <dbReference type="Rhea" id="RHEA-COMP:12673"/>
        <dbReference type="ChEBI" id="CHEBI:15378"/>
        <dbReference type="ChEBI" id="CHEBI:64719"/>
        <dbReference type="ChEBI" id="CHEBI:78442"/>
        <dbReference type="ChEBI" id="CHEBI:78494"/>
        <dbReference type="ChEBI" id="CHEBI:133044"/>
        <dbReference type="EC" id="2.3.2.6"/>
    </reaction>
</comment>
<comment type="catalytic activity">
    <reaction evidence="1">
        <text>L-phenylalanyl-tRNA(Phe) + an N-terminal L-alpha-aminoacyl-[protein] = an N-terminal L-phenylalanyl-L-alpha-aminoacyl-[protein] + tRNA(Phe)</text>
        <dbReference type="Rhea" id="RHEA:43632"/>
        <dbReference type="Rhea" id="RHEA-COMP:9668"/>
        <dbReference type="Rhea" id="RHEA-COMP:9699"/>
        <dbReference type="Rhea" id="RHEA-COMP:10636"/>
        <dbReference type="Rhea" id="RHEA-COMP:10637"/>
        <dbReference type="ChEBI" id="CHEBI:78442"/>
        <dbReference type="ChEBI" id="CHEBI:78531"/>
        <dbReference type="ChEBI" id="CHEBI:78597"/>
        <dbReference type="ChEBI" id="CHEBI:83561"/>
        <dbReference type="EC" id="2.3.2.6"/>
    </reaction>
</comment>
<comment type="subcellular location">
    <subcellularLocation>
        <location evidence="1">Cytoplasm</location>
    </subcellularLocation>
</comment>
<comment type="similarity">
    <text evidence="1">Belongs to the L/F-transferase family.</text>
</comment>
<accession>Q87DL5</accession>
<protein>
    <recommendedName>
        <fullName evidence="1">Leucyl/phenylalanyl-tRNA--protein transferase</fullName>
        <ecNumber evidence="1">2.3.2.6</ecNumber>
    </recommendedName>
    <alternativeName>
        <fullName evidence="1">L/F-transferase</fullName>
    </alternativeName>
    <alternativeName>
        <fullName evidence="1">Leucyltransferase</fullName>
    </alternativeName>
    <alternativeName>
        <fullName evidence="1">Phenyalanyltransferase</fullName>
    </alternativeName>
</protein>